<protein>
    <recommendedName>
        <fullName>Low affinity immunoglobulin gamma Fc region receptor II-a</fullName>
        <shortName>IgG Fc receptor II-a</shortName>
    </recommendedName>
    <alternativeName>
        <fullName>Fc-gamma RII-a</fullName>
        <shortName>Fc-gamma-RIIa</shortName>
        <shortName>FcRII-a</shortName>
    </alternativeName>
    <cdAntigenName>CD32</cdAntigenName>
</protein>
<proteinExistence type="evidence at transcript level"/>
<reference key="1">
    <citation type="submission" date="2002-02" db="EMBL/GenBank/DDBJ databases">
        <title>Non-human primate Fc receptors and methods of use.</title>
        <authorList>
            <person name="Presta L.G."/>
            <person name="Namenuk A.K."/>
        </authorList>
    </citation>
    <scope>NUCLEOTIDE SEQUENCE [MRNA]</scope>
    <source>
        <tissue>Spleen</tissue>
    </source>
</reference>
<gene>
    <name type="primary">FCGR2A</name>
</gene>
<accession>Q8SPV8</accession>
<comment type="function">
    <text evidence="1">Binds to the Fc region of immunoglobulins gamma. Low affinity receptor. By binding to IgG it initiates cellular responses against pathogens and soluble antigens. Promotes phagocytosis of opsonized antigens (By similarity).</text>
</comment>
<comment type="subunit">
    <text evidence="1">Interacts with INPP5D/SHIP1 and INPPL1/SHIP2, regulating its function. Interacts with APCS and FGR. Interacts with HCK (By similarity).</text>
</comment>
<comment type="subcellular location">
    <subcellularLocation>
        <location>Cell membrane</location>
        <topology>Single-pass type I membrane protein</topology>
    </subcellularLocation>
</comment>
<comment type="PTM">
    <text evidence="1">Phosphorylated by SRC-type Tyr-kinases such as HCK, LYN, BLK, FYN and SYK.</text>
</comment>
<evidence type="ECO:0000250" key="1"/>
<evidence type="ECO:0000250" key="2">
    <source>
        <dbReference type="UniProtKB" id="P12318"/>
    </source>
</evidence>
<evidence type="ECO:0000255" key="3"/>
<evidence type="ECO:0000255" key="4">
    <source>
        <dbReference type="PROSITE-ProRule" id="PRU00114"/>
    </source>
</evidence>
<dbReference type="EMBL" id="AF485819">
    <property type="protein sequence ID" value="AAL92102.1"/>
    <property type="molecule type" value="mRNA"/>
</dbReference>
<dbReference type="RefSeq" id="NP_001009077.1">
    <property type="nucleotide sequence ID" value="NM_001009077.1"/>
</dbReference>
<dbReference type="SMR" id="Q8SPV8"/>
<dbReference type="FunCoup" id="Q8SPV8">
    <property type="interactions" value="477"/>
</dbReference>
<dbReference type="STRING" id="9598.ENSPTRP00000040980"/>
<dbReference type="GlyCosmos" id="Q8SPV8">
    <property type="glycosylation" value="3 sites, No reported glycans"/>
</dbReference>
<dbReference type="PaxDb" id="9598-ENSPTRP00000040980"/>
<dbReference type="GeneID" id="450194"/>
<dbReference type="KEGG" id="ptr:450194"/>
<dbReference type="CTD" id="2212"/>
<dbReference type="eggNOG" id="ENOG502SVEW">
    <property type="taxonomic scope" value="Eukaryota"/>
</dbReference>
<dbReference type="InParanoid" id="Q8SPV8"/>
<dbReference type="Proteomes" id="UP000002277">
    <property type="component" value="Unplaced"/>
</dbReference>
<dbReference type="GO" id="GO:0009897">
    <property type="term" value="C:external side of plasma membrane"/>
    <property type="evidence" value="ECO:0000318"/>
    <property type="project" value="GO_Central"/>
</dbReference>
<dbReference type="GO" id="GO:0019864">
    <property type="term" value="F:IgG binding"/>
    <property type="evidence" value="ECO:0000318"/>
    <property type="project" value="GO_Central"/>
</dbReference>
<dbReference type="GO" id="GO:0019770">
    <property type="term" value="F:IgG receptor activity"/>
    <property type="evidence" value="ECO:0000318"/>
    <property type="project" value="GO_Central"/>
</dbReference>
<dbReference type="GO" id="GO:0001788">
    <property type="term" value="P:antibody-dependent cellular cytotoxicity"/>
    <property type="evidence" value="ECO:0000318"/>
    <property type="project" value="GO_Central"/>
</dbReference>
<dbReference type="GO" id="GO:0007166">
    <property type="term" value="P:cell surface receptor signaling pathway"/>
    <property type="evidence" value="ECO:0000318"/>
    <property type="project" value="GO_Central"/>
</dbReference>
<dbReference type="GO" id="GO:0050766">
    <property type="term" value="P:positive regulation of phagocytosis"/>
    <property type="evidence" value="ECO:0000318"/>
    <property type="project" value="GO_Central"/>
</dbReference>
<dbReference type="GO" id="GO:0032760">
    <property type="term" value="P:positive regulation of tumor necrosis factor production"/>
    <property type="evidence" value="ECO:0000318"/>
    <property type="project" value="GO_Central"/>
</dbReference>
<dbReference type="CDD" id="cd05752">
    <property type="entry name" value="Ig1_FcgammaR_like"/>
    <property type="match status" value="1"/>
</dbReference>
<dbReference type="CDD" id="cd05753">
    <property type="entry name" value="Ig2_FcgammaR_like"/>
    <property type="match status" value="1"/>
</dbReference>
<dbReference type="FunFam" id="2.60.40.10:FF:000217">
    <property type="entry name" value="High affinity immunoglobulin gamma Fc receptor I"/>
    <property type="match status" value="1"/>
</dbReference>
<dbReference type="FunFam" id="2.60.40.10:FF:000356">
    <property type="entry name" value="Low affinity immunoglobulin gamma Fc region receptor III-A"/>
    <property type="match status" value="1"/>
</dbReference>
<dbReference type="Gene3D" id="2.60.40.10">
    <property type="entry name" value="Immunoglobulins"/>
    <property type="match status" value="2"/>
</dbReference>
<dbReference type="InterPro" id="IPR007110">
    <property type="entry name" value="Ig-like_dom"/>
</dbReference>
<dbReference type="InterPro" id="IPR036179">
    <property type="entry name" value="Ig-like_dom_sf"/>
</dbReference>
<dbReference type="InterPro" id="IPR013783">
    <property type="entry name" value="Ig-like_fold"/>
</dbReference>
<dbReference type="InterPro" id="IPR050488">
    <property type="entry name" value="Ig_Fc_receptor"/>
</dbReference>
<dbReference type="InterPro" id="IPR003599">
    <property type="entry name" value="Ig_sub"/>
</dbReference>
<dbReference type="InterPro" id="IPR003598">
    <property type="entry name" value="Ig_sub2"/>
</dbReference>
<dbReference type="PANTHER" id="PTHR11481">
    <property type="entry name" value="IMMUNOGLOBULIN FC RECEPTOR"/>
    <property type="match status" value="1"/>
</dbReference>
<dbReference type="PANTHER" id="PTHR11481:SF106">
    <property type="entry name" value="LOW AFFINITY IMMUNOGLOBULIN GAMMA FC REGION RECEPTOR II-A"/>
    <property type="match status" value="1"/>
</dbReference>
<dbReference type="Pfam" id="PF13895">
    <property type="entry name" value="Ig_2"/>
    <property type="match status" value="2"/>
</dbReference>
<dbReference type="SMART" id="SM00409">
    <property type="entry name" value="IG"/>
    <property type="match status" value="2"/>
</dbReference>
<dbReference type="SMART" id="SM00408">
    <property type="entry name" value="IGc2"/>
    <property type="match status" value="2"/>
</dbReference>
<dbReference type="SUPFAM" id="SSF48726">
    <property type="entry name" value="Immunoglobulin"/>
    <property type="match status" value="2"/>
</dbReference>
<dbReference type="PROSITE" id="PS50835">
    <property type="entry name" value="IG_LIKE"/>
    <property type="match status" value="2"/>
</dbReference>
<organism>
    <name type="scientific">Pan troglodytes</name>
    <name type="common">Chimpanzee</name>
    <dbReference type="NCBI Taxonomy" id="9598"/>
    <lineage>
        <taxon>Eukaryota</taxon>
        <taxon>Metazoa</taxon>
        <taxon>Chordata</taxon>
        <taxon>Craniata</taxon>
        <taxon>Vertebrata</taxon>
        <taxon>Euteleostomi</taxon>
        <taxon>Mammalia</taxon>
        <taxon>Eutheria</taxon>
        <taxon>Euarchontoglires</taxon>
        <taxon>Primates</taxon>
        <taxon>Haplorrhini</taxon>
        <taxon>Catarrhini</taxon>
        <taxon>Hominidae</taxon>
        <taxon>Pan</taxon>
    </lineage>
</organism>
<sequence>MAMETQMSQNVCPRNLWLLQPLTVLLLLASADSQAAPPKAVLKLEPPWINVLQEDSVTLTCRGARSPESDSIQWFHNGNLIPTHTQPSYRFKANNNDSGEYTCQTGQTSLSDPVHLTVLSEWLVLQTPHLEFQEGETIVLRCHSWKDKPLVKVTFFQNGKSQKFSHLDPNLSIPQANHSHSGDYHCTGNIGYTLFSSKPVTITVQAPSVGSSSPVGIIVAVVIATAVAAIVAAVVALIYCRKKRISANSTDPVKAAQFEPPGRQMIAIRKRQLEETNNDYETADGGYMTLNPRAPTDDDKNIYLTLPPNDHVNSNN</sequence>
<feature type="signal peptide" evidence="3">
    <location>
        <begin position="1"/>
        <end position="35"/>
    </location>
</feature>
<feature type="chain" id="PRO_0000015146" description="Low affinity immunoglobulin gamma Fc region receptor II-a">
    <location>
        <begin position="36"/>
        <end position="316"/>
    </location>
</feature>
<feature type="topological domain" description="Extracellular" evidence="3">
    <location>
        <begin position="36"/>
        <end position="216"/>
    </location>
</feature>
<feature type="transmembrane region" description="Helical" evidence="3">
    <location>
        <begin position="217"/>
        <end position="239"/>
    </location>
</feature>
<feature type="topological domain" description="Cytoplasmic" evidence="3">
    <location>
        <begin position="240"/>
        <end position="316"/>
    </location>
</feature>
<feature type="domain" description="Ig-like C2-type 1">
    <location>
        <begin position="38"/>
        <end position="117"/>
    </location>
</feature>
<feature type="domain" description="Ig-like C2-type 2">
    <location>
        <begin position="121"/>
        <end position="203"/>
    </location>
</feature>
<feature type="modified residue" description="Phosphotyrosine; by SRC-type Tyr-kinases" evidence="2">
    <location>
        <position position="287"/>
    </location>
</feature>
<feature type="modified residue" description="Phosphotyrosine; by SRC-type Tyr-kinases" evidence="2">
    <location>
        <position position="303"/>
    </location>
</feature>
<feature type="glycosylation site" description="N-linked (GlcNAc...) asparagine" evidence="3">
    <location>
        <position position="96"/>
    </location>
</feature>
<feature type="glycosylation site" description="N-linked (GlcNAc...) asparagine" evidence="3">
    <location>
        <position position="170"/>
    </location>
</feature>
<feature type="glycosylation site" description="N-linked (GlcNAc...) asparagine" evidence="3">
    <location>
        <position position="177"/>
    </location>
</feature>
<feature type="disulfide bond" evidence="4">
    <location>
        <begin position="61"/>
        <end position="103"/>
    </location>
</feature>
<feature type="disulfide bond" evidence="4">
    <location>
        <begin position="142"/>
        <end position="186"/>
    </location>
</feature>
<name>FCG2A_PANTR</name>
<keyword id="KW-1003">Cell membrane</keyword>
<keyword id="KW-1015">Disulfide bond</keyword>
<keyword id="KW-0325">Glycoprotein</keyword>
<keyword id="KW-0390">IgG-binding protein</keyword>
<keyword id="KW-0391">Immunity</keyword>
<keyword id="KW-0393">Immunoglobulin domain</keyword>
<keyword id="KW-0472">Membrane</keyword>
<keyword id="KW-0597">Phosphoprotein</keyword>
<keyword id="KW-0675">Receptor</keyword>
<keyword id="KW-1185">Reference proteome</keyword>
<keyword id="KW-0677">Repeat</keyword>
<keyword id="KW-0732">Signal</keyword>
<keyword id="KW-0812">Transmembrane</keyword>
<keyword id="KW-1133">Transmembrane helix</keyword>